<evidence type="ECO:0000255" key="1">
    <source>
        <dbReference type="PROSITE-ProRule" id="PRU00798"/>
    </source>
</evidence>
<accession>P67891</accession>
<accession>P05568</accession>
<organism>
    <name type="scientific">Dendrocygna autumnalis</name>
    <name type="common">Black-bellied whistling-duck</name>
    <name type="synonym">Anas autumnalis</name>
    <dbReference type="NCBI Taxonomy" id="8873"/>
    <lineage>
        <taxon>Eukaryota</taxon>
        <taxon>Metazoa</taxon>
        <taxon>Chordata</taxon>
        <taxon>Craniata</taxon>
        <taxon>Vertebrata</taxon>
        <taxon>Euteleostomi</taxon>
        <taxon>Archelosauria</taxon>
        <taxon>Archosauria</taxon>
        <taxon>Dinosauria</taxon>
        <taxon>Saurischia</taxon>
        <taxon>Theropoda</taxon>
        <taxon>Coelurosauria</taxon>
        <taxon>Aves</taxon>
        <taxon>Neognathae</taxon>
        <taxon>Galloanserae</taxon>
        <taxon>Anseriformes</taxon>
        <taxon>Anatidae</taxon>
        <taxon>Dendrocygninae</taxon>
        <taxon>Dendrocygna</taxon>
    </lineage>
</organism>
<name>IOVO_DENAU</name>
<sequence length="54" mass="5798">VATVDCSDYPKPACTLEYMPLCGSDNKTYGNKCNFCNAVVDSNGTLTLSHFGKC</sequence>
<comment type="subcellular location">
    <subcellularLocation>
        <location>Secreted</location>
    </subcellularLocation>
</comment>
<comment type="domain">
    <text>Avian ovomucoid consists of three homologous, tandem Kazal family inhibitory domains.</text>
</comment>
<protein>
    <recommendedName>
        <fullName>Ovomucoid</fullName>
    </recommendedName>
</protein>
<reference key="1">
    <citation type="journal article" date="1987" name="Biochemistry">
        <title>Ovomucoid third domains from 100 avian species: isolation, sequences, and hypervariability of enzyme-inhibitor contact residues.</title>
        <authorList>
            <person name="Laskowski M. Jr."/>
            <person name="Kato I."/>
            <person name="Ardelt W."/>
            <person name="Cook J."/>
            <person name="Denton A."/>
            <person name="Empie M.W."/>
            <person name="Kohr W.J."/>
            <person name="Park S.J."/>
            <person name="Parks K."/>
            <person name="Schatzley B.L."/>
            <person name="Schoenberger O.L."/>
            <person name="Tashiro M."/>
            <person name="Vichot G."/>
            <person name="Whatley H.E."/>
            <person name="Wieczorek A."/>
            <person name="Wieczorek M."/>
        </authorList>
    </citation>
    <scope>PROTEIN SEQUENCE</scope>
</reference>
<proteinExistence type="evidence at protein level"/>
<keyword id="KW-0903">Direct protein sequencing</keyword>
<keyword id="KW-1015">Disulfide bond</keyword>
<keyword id="KW-0325">Glycoprotein</keyword>
<keyword id="KW-0646">Protease inhibitor</keyword>
<keyword id="KW-0677">Repeat</keyword>
<keyword id="KW-0964">Secreted</keyword>
<keyword id="KW-0722">Serine protease inhibitor</keyword>
<feature type="chain" id="PRO_0000073102" description="Ovomucoid">
    <location>
        <begin position="1" status="less than"/>
        <end position="54" status="greater than"/>
    </location>
</feature>
<feature type="domain" description="Kazal-like" evidence="1">
    <location>
        <begin position="4"/>
        <end position="54"/>
    </location>
</feature>
<feature type="site" description="Reactive bond 3">
    <location>
        <begin position="16"/>
        <end position="17"/>
    </location>
</feature>
<feature type="glycosylation site" description="N-linked (GlcNAc...) asparagine">
    <location>
        <position position="43"/>
    </location>
</feature>
<feature type="disulfide bond">
    <location>
        <begin position="6"/>
        <end position="36"/>
    </location>
</feature>
<feature type="disulfide bond">
    <location>
        <begin position="14"/>
        <end position="33"/>
    </location>
</feature>
<feature type="disulfide bond">
    <location>
        <begin position="22"/>
        <end position="54"/>
    </location>
</feature>
<feature type="non-terminal residue">
    <location>
        <position position="1"/>
    </location>
</feature>
<feature type="non-terminal residue">
    <location>
        <position position="54"/>
    </location>
</feature>
<dbReference type="PIR" id="I31436">
    <property type="entry name" value="I31436"/>
</dbReference>
<dbReference type="SMR" id="P67891"/>
<dbReference type="GO" id="GO:0005576">
    <property type="term" value="C:extracellular region"/>
    <property type="evidence" value="ECO:0007669"/>
    <property type="project" value="UniProtKB-SubCell"/>
</dbReference>
<dbReference type="GO" id="GO:0004867">
    <property type="term" value="F:serine-type endopeptidase inhibitor activity"/>
    <property type="evidence" value="ECO:0007669"/>
    <property type="project" value="UniProtKB-KW"/>
</dbReference>
<dbReference type="CDD" id="cd00104">
    <property type="entry name" value="KAZAL_FS"/>
    <property type="match status" value="1"/>
</dbReference>
<dbReference type="FunFam" id="3.30.60.30:FF:000037">
    <property type="entry name" value="Ovomucoid"/>
    <property type="match status" value="1"/>
</dbReference>
<dbReference type="Gene3D" id="3.30.60.30">
    <property type="match status" value="1"/>
</dbReference>
<dbReference type="InterPro" id="IPR050159">
    <property type="entry name" value="Kazal-type_SerProtInhib"/>
</dbReference>
<dbReference type="InterPro" id="IPR002350">
    <property type="entry name" value="Kazal_dom"/>
</dbReference>
<dbReference type="InterPro" id="IPR036058">
    <property type="entry name" value="Kazal_dom_sf"/>
</dbReference>
<dbReference type="InterPro" id="IPR001239">
    <property type="entry name" value="Prot_inh_Kazal-m"/>
</dbReference>
<dbReference type="PANTHER" id="PTHR47499:SF1">
    <property type="entry name" value="SERINE PROTEASE INHIBITOR KAZAL-TYPE 7"/>
    <property type="match status" value="1"/>
</dbReference>
<dbReference type="PANTHER" id="PTHR47499">
    <property type="entry name" value="SERINE PROTEASE INHIBITOR KAZAL-TYPE 7 SPINK7"/>
    <property type="match status" value="1"/>
</dbReference>
<dbReference type="Pfam" id="PF00050">
    <property type="entry name" value="Kazal_1"/>
    <property type="match status" value="1"/>
</dbReference>
<dbReference type="PRINTS" id="PR00290">
    <property type="entry name" value="KAZALINHBTR"/>
</dbReference>
<dbReference type="SMART" id="SM00280">
    <property type="entry name" value="KAZAL"/>
    <property type="match status" value="1"/>
</dbReference>
<dbReference type="SUPFAM" id="SSF100895">
    <property type="entry name" value="Kazal-type serine protease inhibitors"/>
    <property type="match status" value="1"/>
</dbReference>
<dbReference type="PROSITE" id="PS00282">
    <property type="entry name" value="KAZAL_1"/>
    <property type="match status" value="1"/>
</dbReference>
<dbReference type="PROSITE" id="PS51465">
    <property type="entry name" value="KAZAL_2"/>
    <property type="match status" value="1"/>
</dbReference>